<keyword id="KW-0150">Chloroplast</keyword>
<keyword id="KW-0934">Plastid</keyword>
<keyword id="KW-0687">Ribonucleoprotein</keyword>
<keyword id="KW-0689">Ribosomal protein</keyword>
<keyword id="KW-0694">RNA-binding</keyword>
<keyword id="KW-0699">rRNA-binding</keyword>
<name>RR7_SCHCH</name>
<feature type="chain" id="PRO_0000124501" description="Small ribosomal subunit protein uS7c">
    <location>
        <begin position="1"/>
        <end position="155"/>
    </location>
</feature>
<accession>Q6KGW4</accession>
<geneLocation type="chloroplast"/>
<reference key="1">
    <citation type="submission" date="2000-02" db="EMBL/GenBank/DDBJ databases">
        <title>Long branches in the seed plants and the root of the angiosperms.</title>
        <authorList>
            <person name="Graham S.W."/>
            <person name="Reeves P.A."/>
            <person name="Burns A."/>
            <person name="Olmstead R.G."/>
        </authorList>
    </citation>
    <scope>NUCLEOTIDE SEQUENCE [GENOMIC DNA]</scope>
</reference>
<comment type="function">
    <text evidence="1">One of the primary rRNA binding proteins, it binds directly to 16S rRNA where it nucleates assembly of the head domain of the 30S subunit.</text>
</comment>
<comment type="subunit">
    <text>Part of the 30S ribosomal subunit.</text>
</comment>
<comment type="subcellular location">
    <subcellularLocation>
        <location>Plastid</location>
        <location>Chloroplast</location>
    </subcellularLocation>
</comment>
<comment type="similarity">
    <text evidence="2">Belongs to the universal ribosomal protein uS7 family.</text>
</comment>
<proteinExistence type="inferred from homology"/>
<protein>
    <recommendedName>
        <fullName evidence="2">Small ribosomal subunit protein uS7c</fullName>
    </recommendedName>
    <alternativeName>
        <fullName>30S ribosomal protein S7, chloroplastic</fullName>
    </alternativeName>
</protein>
<evidence type="ECO:0000250" key="1"/>
<evidence type="ECO:0000305" key="2"/>
<dbReference type="EMBL" id="AF238075">
    <property type="protein sequence ID" value="AAQ14230.1"/>
    <property type="molecule type" value="Genomic_DNA"/>
</dbReference>
<dbReference type="RefSeq" id="YP_009378458.1">
    <property type="nucleotide sequence ID" value="NC_034908.1"/>
</dbReference>
<dbReference type="RefSeq" id="YP_009378472.1">
    <property type="nucleotide sequence ID" value="NC_034908.1"/>
</dbReference>
<dbReference type="SMR" id="Q6KGW4"/>
<dbReference type="GeneID" id="32956253"/>
<dbReference type="GeneID" id="32956363"/>
<dbReference type="GO" id="GO:0009507">
    <property type="term" value="C:chloroplast"/>
    <property type="evidence" value="ECO:0007669"/>
    <property type="project" value="UniProtKB-SubCell"/>
</dbReference>
<dbReference type="GO" id="GO:0015935">
    <property type="term" value="C:small ribosomal subunit"/>
    <property type="evidence" value="ECO:0007669"/>
    <property type="project" value="InterPro"/>
</dbReference>
<dbReference type="GO" id="GO:0019843">
    <property type="term" value="F:rRNA binding"/>
    <property type="evidence" value="ECO:0007669"/>
    <property type="project" value="UniProtKB-UniRule"/>
</dbReference>
<dbReference type="GO" id="GO:0003735">
    <property type="term" value="F:structural constituent of ribosome"/>
    <property type="evidence" value="ECO:0007669"/>
    <property type="project" value="InterPro"/>
</dbReference>
<dbReference type="GO" id="GO:0006412">
    <property type="term" value="P:translation"/>
    <property type="evidence" value="ECO:0007669"/>
    <property type="project" value="UniProtKB-UniRule"/>
</dbReference>
<dbReference type="CDD" id="cd14871">
    <property type="entry name" value="uS7_Chloroplast"/>
    <property type="match status" value="1"/>
</dbReference>
<dbReference type="FunFam" id="1.10.455.10:FF:000001">
    <property type="entry name" value="30S ribosomal protein S7"/>
    <property type="match status" value="1"/>
</dbReference>
<dbReference type="Gene3D" id="1.10.455.10">
    <property type="entry name" value="Ribosomal protein S7 domain"/>
    <property type="match status" value="1"/>
</dbReference>
<dbReference type="HAMAP" id="MF_00480_B">
    <property type="entry name" value="Ribosomal_uS7_B"/>
    <property type="match status" value="1"/>
</dbReference>
<dbReference type="InterPro" id="IPR000235">
    <property type="entry name" value="Ribosomal_uS7"/>
</dbReference>
<dbReference type="InterPro" id="IPR005717">
    <property type="entry name" value="Ribosomal_uS7_bac/org-type"/>
</dbReference>
<dbReference type="InterPro" id="IPR020606">
    <property type="entry name" value="Ribosomal_uS7_CS"/>
</dbReference>
<dbReference type="InterPro" id="IPR023798">
    <property type="entry name" value="Ribosomal_uS7_dom"/>
</dbReference>
<dbReference type="InterPro" id="IPR036823">
    <property type="entry name" value="Ribosomal_uS7_dom_sf"/>
</dbReference>
<dbReference type="NCBIfam" id="TIGR01029">
    <property type="entry name" value="rpsG_bact"/>
    <property type="match status" value="1"/>
</dbReference>
<dbReference type="PANTHER" id="PTHR11205">
    <property type="entry name" value="RIBOSOMAL PROTEIN S7"/>
    <property type="match status" value="1"/>
</dbReference>
<dbReference type="Pfam" id="PF00177">
    <property type="entry name" value="Ribosomal_S7"/>
    <property type="match status" value="1"/>
</dbReference>
<dbReference type="PIRSF" id="PIRSF002122">
    <property type="entry name" value="RPS7p_RPS7a_RPS5e_RPS7o"/>
    <property type="match status" value="1"/>
</dbReference>
<dbReference type="SUPFAM" id="SSF47973">
    <property type="entry name" value="Ribosomal protein S7"/>
    <property type="match status" value="1"/>
</dbReference>
<dbReference type="PROSITE" id="PS00052">
    <property type="entry name" value="RIBOSOMAL_S7"/>
    <property type="match status" value="1"/>
</dbReference>
<organism>
    <name type="scientific">Schisandra chinensis</name>
    <name type="common">Chinese magnolia vine</name>
    <name type="synonym">Kadsura chinensis</name>
    <dbReference type="NCBI Taxonomy" id="50507"/>
    <lineage>
        <taxon>Eukaryota</taxon>
        <taxon>Viridiplantae</taxon>
        <taxon>Streptophyta</taxon>
        <taxon>Embryophyta</taxon>
        <taxon>Tracheophyta</taxon>
        <taxon>Spermatophyta</taxon>
        <taxon>Magnoliopsida</taxon>
        <taxon>Austrobaileyales</taxon>
        <taxon>Schisandraceae</taxon>
        <taxon>Schisandra</taxon>
    </lineage>
</organism>
<sequence length="155" mass="17313">MSRRGTAEEKTAKSDPIYRNRLVNMLVNRILKHGKKSLAYQIIYRAVKKIQQKTEANPLSVLRQAIRGVTPDIAVKARRVGGSTHQVPIEIGSTQGKALAIRWLLGASRKRPGRNMAFKLSSELVDAAKGSGDAIRKKEETHRMAEANRAFAHFR</sequence>
<gene>
    <name type="primary">rps7</name>
</gene>